<reference key="1">
    <citation type="journal article" date="2006" name="Mol. Microbiol.">
        <title>Role of pathogenicity island-associated integrases in the genome plasticity of uropathogenic Escherichia coli strain 536.</title>
        <authorList>
            <person name="Hochhut B."/>
            <person name="Wilde C."/>
            <person name="Balling G."/>
            <person name="Middendorf B."/>
            <person name="Dobrindt U."/>
            <person name="Brzuszkiewicz E."/>
            <person name="Gottschalk G."/>
            <person name="Carniel E."/>
            <person name="Hacker J."/>
        </authorList>
    </citation>
    <scope>NUCLEOTIDE SEQUENCE [LARGE SCALE GENOMIC DNA]</scope>
    <source>
        <strain>536 / UPEC</strain>
    </source>
</reference>
<comment type="function">
    <text evidence="1">Interacts with the SecY protein in vivo. May bind preferentially to an uncomplexed state of SecY, thus functioning either as a chelating agent for excess SecY in the cell or as a regulatory factor that negatively controls the translocase function.</text>
</comment>
<comment type="subcellular location">
    <subcellularLocation>
        <location evidence="1">Cell inner membrane</location>
        <topology evidence="1">Peripheral membrane protein</topology>
        <orientation evidence="1">Cytoplasmic side</orientation>
    </subcellularLocation>
    <text evidence="1">Loosely associated with the cytoplasmic side of the inner membrane, probably via SecY.</text>
</comment>
<comment type="similarity">
    <text evidence="1">Belongs to the Syd family.</text>
</comment>
<sequence length="181" mass="20708">MDDLTAQALKDFTARYCDAWHEEHKSWPLSEELYGVPSPCIISTTEDAVYWQPQPFTGEQNVNAVERAFDIVIQPTIHTFYTTQFAGDMHAQFGDIKLTLLQTWSEDDFRRVQENLIGHLVTQKRLKLPPTLFIATLEEELEVISVCNLSGEVCKETLGTRKRTHLASNLAEFLNQLKPLL</sequence>
<dbReference type="EMBL" id="CP000247">
    <property type="protein sequence ID" value="ABG70764.1"/>
    <property type="molecule type" value="Genomic_DNA"/>
</dbReference>
<dbReference type="RefSeq" id="WP_000342431.1">
    <property type="nucleotide sequence ID" value="NC_008253.1"/>
</dbReference>
<dbReference type="SMR" id="Q0TE65"/>
<dbReference type="GeneID" id="93779205"/>
<dbReference type="KEGG" id="ecp:ECP_2775"/>
<dbReference type="HOGENOM" id="CLU_121866_0_0_6"/>
<dbReference type="Proteomes" id="UP000009182">
    <property type="component" value="Chromosome"/>
</dbReference>
<dbReference type="GO" id="GO:0009898">
    <property type="term" value="C:cytoplasmic side of plasma membrane"/>
    <property type="evidence" value="ECO:0007669"/>
    <property type="project" value="InterPro"/>
</dbReference>
<dbReference type="CDD" id="cd16323">
    <property type="entry name" value="Syd"/>
    <property type="match status" value="1"/>
</dbReference>
<dbReference type="FunFam" id="3.40.1580.20:FF:000001">
    <property type="entry name" value="Protein Syd"/>
    <property type="match status" value="1"/>
</dbReference>
<dbReference type="Gene3D" id="3.40.1580.20">
    <property type="entry name" value="Syd protein"/>
    <property type="match status" value="1"/>
</dbReference>
<dbReference type="HAMAP" id="MF_01104">
    <property type="entry name" value="Syd"/>
    <property type="match status" value="1"/>
</dbReference>
<dbReference type="InterPro" id="IPR009948">
    <property type="entry name" value="Syd"/>
</dbReference>
<dbReference type="InterPro" id="IPR038228">
    <property type="entry name" value="Syd_sf"/>
</dbReference>
<dbReference type="NCBIfam" id="NF003439">
    <property type="entry name" value="PRK04968.1"/>
    <property type="match status" value="1"/>
</dbReference>
<dbReference type="Pfam" id="PF07348">
    <property type="entry name" value="Syd"/>
    <property type="match status" value="1"/>
</dbReference>
<protein>
    <recommendedName>
        <fullName evidence="1">Protein Syd</fullName>
    </recommendedName>
</protein>
<feature type="chain" id="PRO_0000298250" description="Protein Syd">
    <location>
        <begin position="1"/>
        <end position="181"/>
    </location>
</feature>
<keyword id="KW-0997">Cell inner membrane</keyword>
<keyword id="KW-1003">Cell membrane</keyword>
<keyword id="KW-0472">Membrane</keyword>
<name>SYDP_ECOL5</name>
<organism>
    <name type="scientific">Escherichia coli O6:K15:H31 (strain 536 / UPEC)</name>
    <dbReference type="NCBI Taxonomy" id="362663"/>
    <lineage>
        <taxon>Bacteria</taxon>
        <taxon>Pseudomonadati</taxon>
        <taxon>Pseudomonadota</taxon>
        <taxon>Gammaproteobacteria</taxon>
        <taxon>Enterobacterales</taxon>
        <taxon>Enterobacteriaceae</taxon>
        <taxon>Escherichia</taxon>
    </lineage>
</organism>
<gene>
    <name evidence="1" type="primary">syd</name>
    <name type="ordered locus">ECP_2775</name>
</gene>
<accession>Q0TE65</accession>
<proteinExistence type="inferred from homology"/>
<evidence type="ECO:0000255" key="1">
    <source>
        <dbReference type="HAMAP-Rule" id="MF_01104"/>
    </source>
</evidence>